<accession>Q01T78</accession>
<feature type="chain" id="PRO_0000370163" description="3-deoxy-manno-octulosonate cytidylyltransferase">
    <location>
        <begin position="1"/>
        <end position="252"/>
    </location>
</feature>
<sequence length="252" mass="28087">MPRKILGVIPARFSSTRFPGKVLAQIANKTMLQHVYERAGLATYLTSTIIATDDERVYTAAKSFGARVRMTRADHLSGTDRVAEVASAENAEIIVNIQGDEPLIDPAAIDAAVLPLVHEPDVLMGTLKKRIEDPREIVDPNVVKVVTDHAGDAIYFSRCPIPFDRDRSADTPYFKHVGLYVYQRDFLLSYSTLPVGPLERSERLEQLRALENGYRIRVVETEYESLGVDTPEDLERVSRLFKASILQGMGNG</sequence>
<organism>
    <name type="scientific">Solibacter usitatus (strain Ellin6076)</name>
    <dbReference type="NCBI Taxonomy" id="234267"/>
    <lineage>
        <taxon>Bacteria</taxon>
        <taxon>Pseudomonadati</taxon>
        <taxon>Acidobacteriota</taxon>
        <taxon>Terriglobia</taxon>
        <taxon>Bryobacterales</taxon>
        <taxon>Solibacteraceae</taxon>
        <taxon>Candidatus Solibacter</taxon>
    </lineage>
</organism>
<dbReference type="EC" id="2.7.7.38" evidence="1"/>
<dbReference type="EMBL" id="CP000473">
    <property type="protein sequence ID" value="ABJ87142.1"/>
    <property type="molecule type" value="Genomic_DNA"/>
</dbReference>
<dbReference type="SMR" id="Q01T78"/>
<dbReference type="FunCoup" id="Q01T78">
    <property type="interactions" value="452"/>
</dbReference>
<dbReference type="STRING" id="234267.Acid_6216"/>
<dbReference type="KEGG" id="sus:Acid_6216"/>
<dbReference type="eggNOG" id="COG1212">
    <property type="taxonomic scope" value="Bacteria"/>
</dbReference>
<dbReference type="HOGENOM" id="CLU_065038_0_1_0"/>
<dbReference type="InParanoid" id="Q01T78"/>
<dbReference type="OrthoDB" id="9815559at2"/>
<dbReference type="UniPathway" id="UPA00030"/>
<dbReference type="UniPathway" id="UPA00358">
    <property type="reaction ID" value="UER00476"/>
</dbReference>
<dbReference type="GO" id="GO:0005829">
    <property type="term" value="C:cytosol"/>
    <property type="evidence" value="ECO:0007669"/>
    <property type="project" value="TreeGrafter"/>
</dbReference>
<dbReference type="GO" id="GO:0008690">
    <property type="term" value="F:3-deoxy-manno-octulosonate cytidylyltransferase activity"/>
    <property type="evidence" value="ECO:0007669"/>
    <property type="project" value="UniProtKB-UniRule"/>
</dbReference>
<dbReference type="GO" id="GO:0033468">
    <property type="term" value="P:CMP-keto-3-deoxy-D-manno-octulosonic acid biosynthetic process"/>
    <property type="evidence" value="ECO:0007669"/>
    <property type="project" value="UniProtKB-UniRule"/>
</dbReference>
<dbReference type="GO" id="GO:0009103">
    <property type="term" value="P:lipopolysaccharide biosynthetic process"/>
    <property type="evidence" value="ECO:0007669"/>
    <property type="project" value="UniProtKB-UniRule"/>
</dbReference>
<dbReference type="CDD" id="cd02517">
    <property type="entry name" value="CMP-KDO-Synthetase"/>
    <property type="match status" value="1"/>
</dbReference>
<dbReference type="FunFam" id="3.90.550.10:FF:000011">
    <property type="entry name" value="3-deoxy-manno-octulosonate cytidylyltransferase"/>
    <property type="match status" value="1"/>
</dbReference>
<dbReference type="Gene3D" id="3.90.550.10">
    <property type="entry name" value="Spore Coat Polysaccharide Biosynthesis Protein SpsA, Chain A"/>
    <property type="match status" value="1"/>
</dbReference>
<dbReference type="HAMAP" id="MF_00057">
    <property type="entry name" value="KdsB"/>
    <property type="match status" value="1"/>
</dbReference>
<dbReference type="InterPro" id="IPR003329">
    <property type="entry name" value="Cytidylyl_trans"/>
</dbReference>
<dbReference type="InterPro" id="IPR004528">
    <property type="entry name" value="KdsB"/>
</dbReference>
<dbReference type="InterPro" id="IPR029044">
    <property type="entry name" value="Nucleotide-diphossugar_trans"/>
</dbReference>
<dbReference type="NCBIfam" id="TIGR00466">
    <property type="entry name" value="kdsB"/>
    <property type="match status" value="1"/>
</dbReference>
<dbReference type="NCBIfam" id="NF003950">
    <property type="entry name" value="PRK05450.1-3"/>
    <property type="match status" value="1"/>
</dbReference>
<dbReference type="NCBIfam" id="NF003952">
    <property type="entry name" value="PRK05450.1-5"/>
    <property type="match status" value="1"/>
</dbReference>
<dbReference type="NCBIfam" id="NF009905">
    <property type="entry name" value="PRK13368.1"/>
    <property type="match status" value="1"/>
</dbReference>
<dbReference type="PANTHER" id="PTHR42866">
    <property type="entry name" value="3-DEOXY-MANNO-OCTULOSONATE CYTIDYLYLTRANSFERASE"/>
    <property type="match status" value="1"/>
</dbReference>
<dbReference type="PANTHER" id="PTHR42866:SF2">
    <property type="entry name" value="3-DEOXY-MANNO-OCTULOSONATE CYTIDYLYLTRANSFERASE, MITOCHONDRIAL"/>
    <property type="match status" value="1"/>
</dbReference>
<dbReference type="Pfam" id="PF02348">
    <property type="entry name" value="CTP_transf_3"/>
    <property type="match status" value="1"/>
</dbReference>
<dbReference type="SUPFAM" id="SSF53448">
    <property type="entry name" value="Nucleotide-diphospho-sugar transferases"/>
    <property type="match status" value="1"/>
</dbReference>
<protein>
    <recommendedName>
        <fullName evidence="1">3-deoxy-manno-octulosonate cytidylyltransferase</fullName>
        <ecNumber evidence="1">2.7.7.38</ecNumber>
    </recommendedName>
    <alternativeName>
        <fullName evidence="1">CMP-2-keto-3-deoxyoctulosonic acid synthase</fullName>
        <shortName evidence="1">CKS</shortName>
        <shortName evidence="1">CMP-KDO synthase</shortName>
    </alternativeName>
</protein>
<gene>
    <name evidence="1" type="primary">kdsB</name>
    <name type="ordered locus">Acid_6216</name>
</gene>
<reference key="1">
    <citation type="journal article" date="2009" name="Appl. Environ. Microbiol.">
        <title>Three genomes from the phylum Acidobacteria provide insight into the lifestyles of these microorganisms in soils.</title>
        <authorList>
            <person name="Ward N.L."/>
            <person name="Challacombe J.F."/>
            <person name="Janssen P.H."/>
            <person name="Henrissat B."/>
            <person name="Coutinho P.M."/>
            <person name="Wu M."/>
            <person name="Xie G."/>
            <person name="Haft D.H."/>
            <person name="Sait M."/>
            <person name="Badger J."/>
            <person name="Barabote R.D."/>
            <person name="Bradley B."/>
            <person name="Brettin T.S."/>
            <person name="Brinkac L.M."/>
            <person name="Bruce D."/>
            <person name="Creasy T."/>
            <person name="Daugherty S.C."/>
            <person name="Davidsen T.M."/>
            <person name="DeBoy R.T."/>
            <person name="Detter J.C."/>
            <person name="Dodson R.J."/>
            <person name="Durkin A.S."/>
            <person name="Ganapathy A."/>
            <person name="Gwinn-Giglio M."/>
            <person name="Han C.S."/>
            <person name="Khouri H."/>
            <person name="Kiss H."/>
            <person name="Kothari S.P."/>
            <person name="Madupu R."/>
            <person name="Nelson K.E."/>
            <person name="Nelson W.C."/>
            <person name="Paulsen I."/>
            <person name="Penn K."/>
            <person name="Ren Q."/>
            <person name="Rosovitz M.J."/>
            <person name="Selengut J.D."/>
            <person name="Shrivastava S."/>
            <person name="Sullivan S.A."/>
            <person name="Tapia R."/>
            <person name="Thompson L.S."/>
            <person name="Watkins K.L."/>
            <person name="Yang Q."/>
            <person name="Yu C."/>
            <person name="Zafar N."/>
            <person name="Zhou L."/>
            <person name="Kuske C.R."/>
        </authorList>
    </citation>
    <scope>NUCLEOTIDE SEQUENCE [LARGE SCALE GENOMIC DNA]</scope>
    <source>
        <strain>Ellin6076</strain>
    </source>
</reference>
<name>KDSB_SOLUE</name>
<keyword id="KW-0963">Cytoplasm</keyword>
<keyword id="KW-0448">Lipopolysaccharide biosynthesis</keyword>
<keyword id="KW-0548">Nucleotidyltransferase</keyword>
<keyword id="KW-0808">Transferase</keyword>
<comment type="function">
    <text evidence="1">Activates KDO (a required 8-carbon sugar) for incorporation into bacterial lipopolysaccharide in Gram-negative bacteria.</text>
</comment>
<comment type="catalytic activity">
    <reaction evidence="1">
        <text>3-deoxy-alpha-D-manno-oct-2-ulosonate + CTP = CMP-3-deoxy-beta-D-manno-octulosonate + diphosphate</text>
        <dbReference type="Rhea" id="RHEA:23448"/>
        <dbReference type="ChEBI" id="CHEBI:33019"/>
        <dbReference type="ChEBI" id="CHEBI:37563"/>
        <dbReference type="ChEBI" id="CHEBI:85986"/>
        <dbReference type="ChEBI" id="CHEBI:85987"/>
        <dbReference type="EC" id="2.7.7.38"/>
    </reaction>
</comment>
<comment type="pathway">
    <text evidence="1">Nucleotide-sugar biosynthesis; CMP-3-deoxy-D-manno-octulosonate biosynthesis; CMP-3-deoxy-D-manno-octulosonate from 3-deoxy-D-manno-octulosonate and CTP: step 1/1.</text>
</comment>
<comment type="pathway">
    <text evidence="1">Bacterial outer membrane biogenesis; lipopolysaccharide biosynthesis.</text>
</comment>
<comment type="subcellular location">
    <subcellularLocation>
        <location evidence="1">Cytoplasm</location>
    </subcellularLocation>
</comment>
<comment type="similarity">
    <text evidence="1">Belongs to the KdsB family.</text>
</comment>
<evidence type="ECO:0000255" key="1">
    <source>
        <dbReference type="HAMAP-Rule" id="MF_00057"/>
    </source>
</evidence>
<proteinExistence type="inferred from homology"/>